<sequence>MTAILERRESESLWGRFCNWITSTENRLYIGWFGVLMIPTLLTATSVFIIAFIAAPPVDIDGIREPVSGSLLYGNNIISGAIIPTSAAIGLHFYPIWEAASVDEWLYNGGPYELIVLHFLLGVACYMGREWELSFRLGMRPWIAVAYSAPVAAATAVFLIYPIGQGSFSDGMPLGISGTFNFMIVFQAEHNILMHPFHMLGVAGVFGGSLFSAMHGSLVTSSLIRETTENESANEGYRFGQEEETYNIVAAHGYFGRLIFQYASFNNSRSLHFFLAAWPVVGIWFTALGISTMAFNLNGFNFNQSVVDSQGRVINTWADIINRANLGMEVMHERNAHNFPLDLAAMEAPSVNG</sequence>
<geneLocation type="chloroplast"/>
<name>PSBA_PHAVU</name>
<gene>
    <name evidence="1" type="primary">psbA</name>
</gene>
<evidence type="ECO:0000255" key="1">
    <source>
        <dbReference type="HAMAP-Rule" id="MF_01379"/>
    </source>
</evidence>
<evidence type="ECO:0000305" key="2"/>
<reference key="1">
    <citation type="journal article" date="2007" name="BMC Genomics">
        <title>Rapid evolutionary change of common bean (Phaseolus vulgaris L) plastome, and the genomic diversification of legume chloroplasts.</title>
        <authorList>
            <person name="Guo X."/>
            <person name="Castillo-Ramirez S."/>
            <person name="Gonzalez V."/>
            <person name="Bustos P."/>
            <person name="Fernandez-Vazquez J.L."/>
            <person name="Santamaria R.I."/>
            <person name="Arellano J."/>
            <person name="Cevallos M.A."/>
            <person name="Davila G."/>
        </authorList>
    </citation>
    <scope>NUCLEOTIDE SEQUENCE [LARGE SCALE GENOMIC DNA]</scope>
    <source>
        <strain>cv. Negro Jamapa</strain>
    </source>
</reference>
<reference key="2">
    <citation type="submission" date="2007-10" db="EMBL/GenBank/DDBJ databases">
        <title>Complete nucleotide sequence of the plastid genome of the common bean, Phaseolus vulgaris.</title>
        <authorList>
            <person name="Moore M.J."/>
            <person name="Triplett E.W."/>
            <person name="Broughton W.J."/>
            <person name="Soltis P.S."/>
            <person name="Soltis D.E."/>
        </authorList>
    </citation>
    <scope>NUCLEOTIDE SEQUENCE [LARGE SCALE GENOMIC DNA]</scope>
</reference>
<reference key="3">
    <citation type="journal article" date="1992" name="Nucleic Acids Res.">
        <title>The common bean chloroplast trnH (GUG) gene and its eukaryotic putative promoter elements.</title>
        <authorList>
            <person name="Carelse O."/>
            <person name="Kempf J."/>
            <person name="Toussaint J.L."/>
            <person name="Chetsanga C."/>
            <person name="Mubumbila M."/>
        </authorList>
    </citation>
    <scope>NUCLEOTIDE SEQUENCE [GENOMIC DNA] OF 207-353</scope>
    <source>
        <strain>cv. Saxa</strain>
        <tissue>Leaf</tissue>
    </source>
</reference>
<dbReference type="EC" id="1.10.3.9" evidence="1"/>
<dbReference type="EMBL" id="DQ886273">
    <property type="protein sequence ID" value="ABH88068.1"/>
    <property type="status" value="ALT_INIT"/>
    <property type="molecule type" value="Genomic_DNA"/>
</dbReference>
<dbReference type="EMBL" id="EU196765">
    <property type="protein sequence ID" value="ABW22800.1"/>
    <property type="molecule type" value="Genomic_DNA"/>
</dbReference>
<dbReference type="EMBL" id="X68048">
    <property type="protein sequence ID" value="CAA48184.1"/>
    <property type="molecule type" value="Genomic_DNA"/>
</dbReference>
<dbReference type="PIR" id="T10840">
    <property type="entry name" value="S25494"/>
</dbReference>
<dbReference type="RefSeq" id="YP_001122788.2">
    <property type="nucleotide sequence ID" value="NC_009259.1"/>
</dbReference>
<dbReference type="SMR" id="Q01366"/>
<dbReference type="GeneID" id="4961753"/>
<dbReference type="KEGG" id="pvu:4961753"/>
<dbReference type="GO" id="GO:0009535">
    <property type="term" value="C:chloroplast thylakoid membrane"/>
    <property type="evidence" value="ECO:0007669"/>
    <property type="project" value="UniProtKB-SubCell"/>
</dbReference>
<dbReference type="GO" id="GO:0009523">
    <property type="term" value="C:photosystem II"/>
    <property type="evidence" value="ECO:0007669"/>
    <property type="project" value="UniProtKB-KW"/>
</dbReference>
<dbReference type="GO" id="GO:0016168">
    <property type="term" value="F:chlorophyll binding"/>
    <property type="evidence" value="ECO:0007669"/>
    <property type="project" value="UniProtKB-UniRule"/>
</dbReference>
<dbReference type="GO" id="GO:0045156">
    <property type="term" value="F:electron transporter, transferring electrons within the cyclic electron transport pathway of photosynthesis activity"/>
    <property type="evidence" value="ECO:0007669"/>
    <property type="project" value="InterPro"/>
</dbReference>
<dbReference type="GO" id="GO:0005506">
    <property type="term" value="F:iron ion binding"/>
    <property type="evidence" value="ECO:0007669"/>
    <property type="project" value="UniProtKB-UniRule"/>
</dbReference>
<dbReference type="GO" id="GO:0016682">
    <property type="term" value="F:oxidoreductase activity, acting on diphenols and related substances as donors, oxygen as acceptor"/>
    <property type="evidence" value="ECO:0007669"/>
    <property type="project" value="UniProtKB-UniRule"/>
</dbReference>
<dbReference type="GO" id="GO:0010242">
    <property type="term" value="F:oxygen evolving activity"/>
    <property type="evidence" value="ECO:0007669"/>
    <property type="project" value="UniProtKB-EC"/>
</dbReference>
<dbReference type="GO" id="GO:0009772">
    <property type="term" value="P:photosynthetic electron transport in photosystem II"/>
    <property type="evidence" value="ECO:0007669"/>
    <property type="project" value="InterPro"/>
</dbReference>
<dbReference type="GO" id="GO:0009635">
    <property type="term" value="P:response to herbicide"/>
    <property type="evidence" value="ECO:0007669"/>
    <property type="project" value="UniProtKB-KW"/>
</dbReference>
<dbReference type="CDD" id="cd09289">
    <property type="entry name" value="Photosystem-II_D1"/>
    <property type="match status" value="1"/>
</dbReference>
<dbReference type="FunFam" id="1.20.85.10:FF:000002">
    <property type="entry name" value="Photosystem II protein D1"/>
    <property type="match status" value="1"/>
</dbReference>
<dbReference type="Gene3D" id="1.20.85.10">
    <property type="entry name" value="Photosystem II protein D1-like"/>
    <property type="match status" value="1"/>
</dbReference>
<dbReference type="HAMAP" id="MF_01379">
    <property type="entry name" value="PSII_PsbA_D1"/>
    <property type="match status" value="1"/>
</dbReference>
<dbReference type="InterPro" id="IPR055266">
    <property type="entry name" value="D1/D2"/>
</dbReference>
<dbReference type="InterPro" id="IPR036854">
    <property type="entry name" value="Photo_II_D1/D2_sf"/>
</dbReference>
<dbReference type="InterPro" id="IPR000484">
    <property type="entry name" value="Photo_RC_L/M"/>
</dbReference>
<dbReference type="InterPro" id="IPR055265">
    <property type="entry name" value="Photo_RC_L/M_CS"/>
</dbReference>
<dbReference type="InterPro" id="IPR005867">
    <property type="entry name" value="PSII_D1"/>
</dbReference>
<dbReference type="NCBIfam" id="TIGR01151">
    <property type="entry name" value="psbA"/>
    <property type="match status" value="1"/>
</dbReference>
<dbReference type="PANTHER" id="PTHR33149:SF12">
    <property type="entry name" value="PHOTOSYSTEM II D2 PROTEIN"/>
    <property type="match status" value="1"/>
</dbReference>
<dbReference type="PANTHER" id="PTHR33149">
    <property type="entry name" value="PHOTOSYSTEM II PROTEIN D1"/>
    <property type="match status" value="1"/>
</dbReference>
<dbReference type="Pfam" id="PF00124">
    <property type="entry name" value="Photo_RC"/>
    <property type="match status" value="1"/>
</dbReference>
<dbReference type="PRINTS" id="PR00256">
    <property type="entry name" value="REACTNCENTRE"/>
</dbReference>
<dbReference type="SUPFAM" id="SSF81483">
    <property type="entry name" value="Bacterial photosystem II reaction centre, L and M subunits"/>
    <property type="match status" value="1"/>
</dbReference>
<dbReference type="PROSITE" id="PS00244">
    <property type="entry name" value="REACTION_CENTER"/>
    <property type="match status" value="1"/>
</dbReference>
<protein>
    <recommendedName>
        <fullName evidence="1">Photosystem II protein D1</fullName>
        <shortName evidence="1">PSII D1 protein</shortName>
        <ecNumber evidence="1">1.10.3.9</ecNumber>
    </recommendedName>
    <alternativeName>
        <fullName evidence="1">Photosystem II Q(B) protein</fullName>
    </alternativeName>
</protein>
<accession>Q01366</accession>
<accession>A4GG87</accession>
<accession>A8W830</accession>
<keyword id="KW-0007">Acetylation</keyword>
<keyword id="KW-0106">Calcium</keyword>
<keyword id="KW-0148">Chlorophyll</keyword>
<keyword id="KW-0150">Chloroplast</keyword>
<keyword id="KW-0157">Chromophore</keyword>
<keyword id="KW-0249">Electron transport</keyword>
<keyword id="KW-0359">Herbicide resistance</keyword>
<keyword id="KW-0408">Iron</keyword>
<keyword id="KW-0460">Magnesium</keyword>
<keyword id="KW-0464">Manganese</keyword>
<keyword id="KW-0472">Membrane</keyword>
<keyword id="KW-0479">Metal-binding</keyword>
<keyword id="KW-0560">Oxidoreductase</keyword>
<keyword id="KW-0597">Phosphoprotein</keyword>
<keyword id="KW-0602">Photosynthesis</keyword>
<keyword id="KW-0604">Photosystem II</keyword>
<keyword id="KW-0934">Plastid</keyword>
<keyword id="KW-0793">Thylakoid</keyword>
<keyword id="KW-0812">Transmembrane</keyword>
<keyword id="KW-1133">Transmembrane helix</keyword>
<keyword id="KW-0813">Transport</keyword>
<organism>
    <name type="scientific">Phaseolus vulgaris</name>
    <name type="common">Kidney bean</name>
    <name type="synonym">French bean</name>
    <dbReference type="NCBI Taxonomy" id="3885"/>
    <lineage>
        <taxon>Eukaryota</taxon>
        <taxon>Viridiplantae</taxon>
        <taxon>Streptophyta</taxon>
        <taxon>Embryophyta</taxon>
        <taxon>Tracheophyta</taxon>
        <taxon>Spermatophyta</taxon>
        <taxon>Magnoliopsida</taxon>
        <taxon>eudicotyledons</taxon>
        <taxon>Gunneridae</taxon>
        <taxon>Pentapetalae</taxon>
        <taxon>rosids</taxon>
        <taxon>fabids</taxon>
        <taxon>Fabales</taxon>
        <taxon>Fabaceae</taxon>
        <taxon>Papilionoideae</taxon>
        <taxon>50 kb inversion clade</taxon>
        <taxon>NPAAA clade</taxon>
        <taxon>indigoferoid/millettioid clade</taxon>
        <taxon>Phaseoleae</taxon>
        <taxon>Phaseolus</taxon>
    </lineage>
</organism>
<comment type="function">
    <text evidence="1">Photosystem II (PSII) is a light-driven water:plastoquinone oxidoreductase that uses light energy to abstract electrons from H(2)O, generating O(2) and a proton gradient subsequently used for ATP formation. It consists of a core antenna complex that captures photons, and an electron transfer chain that converts photonic excitation into a charge separation. The D1/D2 (PsbA/PsbD) reaction center heterodimer binds P680, the primary electron donor of PSII as well as several subsequent electron acceptors.</text>
</comment>
<comment type="catalytic activity">
    <reaction evidence="1">
        <text>2 a plastoquinone + 4 hnu + 2 H2O = 2 a plastoquinol + O2</text>
        <dbReference type="Rhea" id="RHEA:36359"/>
        <dbReference type="Rhea" id="RHEA-COMP:9561"/>
        <dbReference type="Rhea" id="RHEA-COMP:9562"/>
        <dbReference type="ChEBI" id="CHEBI:15377"/>
        <dbReference type="ChEBI" id="CHEBI:15379"/>
        <dbReference type="ChEBI" id="CHEBI:17757"/>
        <dbReference type="ChEBI" id="CHEBI:30212"/>
        <dbReference type="ChEBI" id="CHEBI:62192"/>
        <dbReference type="EC" id="1.10.3.9"/>
    </reaction>
</comment>
<comment type="cofactor">
    <text evidence="1">The D1/D2 heterodimer binds P680, chlorophylls that are the primary electron donor of PSII, and subsequent electron acceptors. It shares a non-heme iron and each subunit binds pheophytin, quinone, additional chlorophylls, carotenoids and lipids. D1 provides most of the ligands for the Mn4-Ca-O5 cluster of the oxygen-evolving complex (OEC). There is also a Cl(-1) ion associated with D1 and D2, which is required for oxygen evolution. The PSII complex binds additional chlorophylls, carotenoids and specific lipids.</text>
</comment>
<comment type="subunit">
    <text evidence="1">PSII is composed of 1 copy each of membrane proteins PsbA, PsbB, PsbC, PsbD, PsbE, PsbF, PsbH, PsbI, PsbJ, PsbK, PsbL, PsbM, PsbT, PsbX, PsbY, PsbZ, Psb30/Ycf12, at least 3 peripheral proteins of the oxygen-evolving complex and a large number of cofactors. It forms dimeric complexes.</text>
</comment>
<comment type="subcellular location">
    <subcellularLocation>
        <location evidence="1">Plastid</location>
        <location evidence="1">Chloroplast thylakoid membrane</location>
        <topology evidence="1">Multi-pass membrane protein</topology>
    </subcellularLocation>
</comment>
<comment type="PTM">
    <text evidence="1">Tyr-161 forms a radical intermediate that is referred to as redox-active TyrZ, YZ or Y-Z.</text>
</comment>
<comment type="PTM">
    <text evidence="1">C-terminally processed by CTPA; processing is essential to allow assembly of the oxygen-evolving complex and thus photosynthetic growth.</text>
</comment>
<comment type="miscellaneous">
    <text evidence="1">2 of the reaction center chlorophylls (ChlD1 and ChlD2) are entirely coordinated by water.</text>
</comment>
<comment type="miscellaneous">
    <text evidence="1">Herbicides such as atrazine, BNT, diuron or ioxynil bind in the Q(B) binding site and block subsequent electron transfer.</text>
</comment>
<comment type="similarity">
    <text evidence="1">Belongs to the reaction center PufL/M/PsbA/D family.</text>
</comment>
<comment type="sequence caution" evidence="2">
    <conflict type="erroneous initiation">
        <sequence resource="EMBL-CDS" id="ABH88068"/>
    </conflict>
    <text>Extended N-terminus.</text>
</comment>
<proteinExistence type="inferred from homology"/>
<feature type="initiator methionine" description="Removed" evidence="1">
    <location>
        <position position="1"/>
    </location>
</feature>
<feature type="chain" id="PRO_0000090462" description="Photosystem II protein D1" evidence="1">
    <location>
        <begin position="2"/>
        <end position="344"/>
    </location>
</feature>
<feature type="propeptide" id="PRO_0000316473" evidence="1">
    <location>
        <begin position="345"/>
        <end position="353"/>
    </location>
</feature>
<feature type="transmembrane region" description="Helical" evidence="1">
    <location>
        <begin position="29"/>
        <end position="46"/>
    </location>
</feature>
<feature type="transmembrane region" description="Helical" evidence="1">
    <location>
        <begin position="118"/>
        <end position="133"/>
    </location>
</feature>
<feature type="transmembrane region" description="Helical" evidence="1">
    <location>
        <begin position="142"/>
        <end position="156"/>
    </location>
</feature>
<feature type="transmembrane region" description="Helical" evidence="1">
    <location>
        <begin position="197"/>
        <end position="218"/>
    </location>
</feature>
<feature type="transmembrane region" description="Helical" evidence="1">
    <location>
        <begin position="274"/>
        <end position="288"/>
    </location>
</feature>
<feature type="binding site" description="axial binding residue" evidence="1">
    <location>
        <position position="118"/>
    </location>
    <ligand>
        <name>chlorophyll a</name>
        <dbReference type="ChEBI" id="CHEBI:58416"/>
        <label>ChlzD1</label>
    </ligand>
    <ligandPart>
        <name>Mg</name>
        <dbReference type="ChEBI" id="CHEBI:25107"/>
    </ligandPart>
</feature>
<feature type="binding site" evidence="1">
    <location>
        <position position="126"/>
    </location>
    <ligand>
        <name>pheophytin a</name>
        <dbReference type="ChEBI" id="CHEBI:136840"/>
        <label>D1</label>
    </ligand>
</feature>
<feature type="binding site" evidence="1">
    <location>
        <position position="170"/>
    </location>
    <ligand>
        <name>[CaMn4O5] cluster</name>
        <dbReference type="ChEBI" id="CHEBI:189552"/>
    </ligand>
</feature>
<feature type="binding site" evidence="1">
    <location>
        <position position="189"/>
    </location>
    <ligand>
        <name>[CaMn4O5] cluster</name>
        <dbReference type="ChEBI" id="CHEBI:189552"/>
    </ligand>
</feature>
<feature type="binding site" description="axial binding residue" evidence="1">
    <location>
        <position position="198"/>
    </location>
    <ligand>
        <name>chlorophyll a</name>
        <dbReference type="ChEBI" id="CHEBI:58416"/>
        <label>PD1</label>
    </ligand>
    <ligandPart>
        <name>Mg</name>
        <dbReference type="ChEBI" id="CHEBI:25107"/>
    </ligandPart>
</feature>
<feature type="binding site" evidence="1">
    <location>
        <position position="215"/>
    </location>
    <ligand>
        <name>a quinone</name>
        <dbReference type="ChEBI" id="CHEBI:132124"/>
        <label>B</label>
    </ligand>
</feature>
<feature type="binding site" evidence="1">
    <location>
        <position position="215"/>
    </location>
    <ligand>
        <name>Fe cation</name>
        <dbReference type="ChEBI" id="CHEBI:24875"/>
        <note>ligand shared with heterodimeric partner</note>
    </ligand>
</feature>
<feature type="binding site" evidence="1">
    <location>
        <begin position="264"/>
        <end position="265"/>
    </location>
    <ligand>
        <name>a quinone</name>
        <dbReference type="ChEBI" id="CHEBI:132124"/>
        <label>B</label>
    </ligand>
</feature>
<feature type="binding site" evidence="1">
    <location>
        <position position="272"/>
    </location>
    <ligand>
        <name>Fe cation</name>
        <dbReference type="ChEBI" id="CHEBI:24875"/>
        <note>ligand shared with heterodimeric partner</note>
    </ligand>
</feature>
<feature type="binding site" evidence="1">
    <location>
        <position position="332"/>
    </location>
    <ligand>
        <name>[CaMn4O5] cluster</name>
        <dbReference type="ChEBI" id="CHEBI:189552"/>
    </ligand>
</feature>
<feature type="binding site" evidence="1">
    <location>
        <position position="333"/>
    </location>
    <ligand>
        <name>[CaMn4O5] cluster</name>
        <dbReference type="ChEBI" id="CHEBI:189552"/>
    </ligand>
</feature>
<feature type="binding site" evidence="1">
    <location>
        <position position="342"/>
    </location>
    <ligand>
        <name>[CaMn4O5] cluster</name>
        <dbReference type="ChEBI" id="CHEBI:189552"/>
    </ligand>
</feature>
<feature type="binding site" evidence="1">
    <location>
        <position position="344"/>
    </location>
    <ligand>
        <name>[CaMn4O5] cluster</name>
        <dbReference type="ChEBI" id="CHEBI:189552"/>
    </ligand>
</feature>
<feature type="site" description="Tyrosine radical intermediate" evidence="1">
    <location>
        <position position="161"/>
    </location>
</feature>
<feature type="site" description="Stabilizes free radical intermediate" evidence="1">
    <location>
        <position position="190"/>
    </location>
</feature>
<feature type="site" description="Cleavage; by CTPA" evidence="1">
    <location>
        <begin position="344"/>
        <end position="345"/>
    </location>
</feature>
<feature type="modified residue" description="N-acetylthreonine" evidence="1">
    <location>
        <position position="2"/>
    </location>
</feature>
<feature type="modified residue" description="Phosphothreonine" evidence="1">
    <location>
        <position position="2"/>
    </location>
</feature>
<feature type="sequence conflict" description="In Ref. 2; CAA48184." evidence="2" ref="2">
    <original>G</original>
    <variation>A</variation>
    <location>
        <position position="207"/>
    </location>
</feature>
<feature type="sequence conflict" description="In Ref. 2; CAA48184." evidence="2" ref="2">
    <original>TTE</original>
    <variation>PTV</variation>
    <location>
        <begin position="227"/>
        <end position="229"/>
    </location>
</feature>
<feature type="sequence conflict" description="In Ref. 2; CAA48184." evidence="2" ref="2">
    <original>A</original>
    <variation>P</variation>
    <location>
        <position position="233"/>
    </location>
</feature>
<feature type="sequence conflict" description="In Ref. 2; CAA48184." evidence="2" ref="2">
    <original>Q</original>
    <variation>R</variation>
    <location>
        <position position="241"/>
    </location>
</feature>
<feature type="sequence conflict" description="In Ref. 2; CAA48184." evidence="2" ref="2">
    <original>A</original>
    <variation>P</variation>
    <location>
        <position position="250"/>
    </location>
</feature>
<feature type="sequence conflict" description="In Ref. 2; CAA48184." evidence="2" ref="2">
    <original>G</original>
    <variation>D</variation>
    <location>
        <position position="256"/>
    </location>
</feature>
<feature type="sequence conflict" description="In Ref. 2; CAA48184." evidence="2" ref="2">
    <original>F</original>
    <variation>Y</variation>
    <location>
        <position position="260"/>
    </location>
</feature>
<feature type="sequence conflict" description="In Ref. 2; CAA48184." evidence="2" ref="2">
    <original>A</original>
    <variation>T</variation>
    <location>
        <position position="318"/>
    </location>
</feature>
<feature type="sequence conflict" description="In Ref. 2; CAA48184." evidence="2" ref="2">
    <original>F</original>
    <variation>G</variation>
    <location>
        <position position="339"/>
    </location>
</feature>